<reference key="1">
    <citation type="journal article" date="2008" name="J. Bacteriol.">
        <title>Complete genome sequence of Leuconostoc citreum KM20.</title>
        <authorList>
            <person name="Kim J.F."/>
            <person name="Jeong H."/>
            <person name="Lee J.-S."/>
            <person name="Choi S.-H."/>
            <person name="Ha M."/>
            <person name="Hur C.-G."/>
            <person name="Kim J.-S."/>
            <person name="Lee S."/>
            <person name="Park H.-S."/>
            <person name="Park Y.-H."/>
            <person name="Oh T.K."/>
        </authorList>
    </citation>
    <scope>NUCLEOTIDE SEQUENCE [LARGE SCALE GENOMIC DNA]</scope>
    <source>
        <strain>KM20</strain>
    </source>
</reference>
<dbReference type="EMBL" id="DQ489736">
    <property type="protein sequence ID" value="ACA83167.1"/>
    <property type="molecule type" value="Genomic_DNA"/>
</dbReference>
<dbReference type="RefSeq" id="WP_004902545.1">
    <property type="nucleotide sequence ID" value="NC_010471.1"/>
</dbReference>
<dbReference type="SMR" id="B1N065"/>
<dbReference type="STRING" id="349519.LCK_01343"/>
<dbReference type="GeneID" id="97230950"/>
<dbReference type="KEGG" id="lci:LCK_01343"/>
<dbReference type="eggNOG" id="COG0184">
    <property type="taxonomic scope" value="Bacteria"/>
</dbReference>
<dbReference type="HOGENOM" id="CLU_148518_0_0_9"/>
<dbReference type="OrthoDB" id="9799262at2"/>
<dbReference type="Proteomes" id="UP000002166">
    <property type="component" value="Chromosome"/>
</dbReference>
<dbReference type="GO" id="GO:0022627">
    <property type="term" value="C:cytosolic small ribosomal subunit"/>
    <property type="evidence" value="ECO:0007669"/>
    <property type="project" value="TreeGrafter"/>
</dbReference>
<dbReference type="GO" id="GO:0019843">
    <property type="term" value="F:rRNA binding"/>
    <property type="evidence" value="ECO:0007669"/>
    <property type="project" value="UniProtKB-UniRule"/>
</dbReference>
<dbReference type="GO" id="GO:0003735">
    <property type="term" value="F:structural constituent of ribosome"/>
    <property type="evidence" value="ECO:0007669"/>
    <property type="project" value="InterPro"/>
</dbReference>
<dbReference type="GO" id="GO:0006412">
    <property type="term" value="P:translation"/>
    <property type="evidence" value="ECO:0007669"/>
    <property type="project" value="UniProtKB-UniRule"/>
</dbReference>
<dbReference type="CDD" id="cd00353">
    <property type="entry name" value="Ribosomal_S15p_S13e"/>
    <property type="match status" value="1"/>
</dbReference>
<dbReference type="FunFam" id="1.10.287.10:FF:000002">
    <property type="entry name" value="30S ribosomal protein S15"/>
    <property type="match status" value="1"/>
</dbReference>
<dbReference type="Gene3D" id="6.10.250.3130">
    <property type="match status" value="1"/>
</dbReference>
<dbReference type="Gene3D" id="1.10.287.10">
    <property type="entry name" value="S15/NS1, RNA-binding"/>
    <property type="match status" value="1"/>
</dbReference>
<dbReference type="HAMAP" id="MF_01343_B">
    <property type="entry name" value="Ribosomal_uS15_B"/>
    <property type="match status" value="1"/>
</dbReference>
<dbReference type="InterPro" id="IPR000589">
    <property type="entry name" value="Ribosomal_uS15"/>
</dbReference>
<dbReference type="InterPro" id="IPR005290">
    <property type="entry name" value="Ribosomal_uS15_bac-type"/>
</dbReference>
<dbReference type="InterPro" id="IPR009068">
    <property type="entry name" value="uS15_NS1_RNA-bd_sf"/>
</dbReference>
<dbReference type="NCBIfam" id="TIGR00952">
    <property type="entry name" value="S15_bact"/>
    <property type="match status" value="1"/>
</dbReference>
<dbReference type="PANTHER" id="PTHR23321">
    <property type="entry name" value="RIBOSOMAL PROTEIN S15, BACTERIAL AND ORGANELLAR"/>
    <property type="match status" value="1"/>
</dbReference>
<dbReference type="PANTHER" id="PTHR23321:SF26">
    <property type="entry name" value="SMALL RIBOSOMAL SUBUNIT PROTEIN US15M"/>
    <property type="match status" value="1"/>
</dbReference>
<dbReference type="Pfam" id="PF00312">
    <property type="entry name" value="Ribosomal_S15"/>
    <property type="match status" value="1"/>
</dbReference>
<dbReference type="SMART" id="SM01387">
    <property type="entry name" value="Ribosomal_S15"/>
    <property type="match status" value="1"/>
</dbReference>
<dbReference type="SUPFAM" id="SSF47060">
    <property type="entry name" value="S15/NS1 RNA-binding domain"/>
    <property type="match status" value="1"/>
</dbReference>
<dbReference type="PROSITE" id="PS00362">
    <property type="entry name" value="RIBOSOMAL_S15"/>
    <property type="match status" value="1"/>
</dbReference>
<evidence type="ECO:0000255" key="1">
    <source>
        <dbReference type="HAMAP-Rule" id="MF_01343"/>
    </source>
</evidence>
<evidence type="ECO:0000305" key="2"/>
<sequence length="89" mass="10494">MALTQERKNEIIKEYARHEGDTGSAEVQIAVLTADINELNVHMAAHKHDFHSQRGLMKKIGSRRNLLRYLRNTDIQRYRELIQRLGLRR</sequence>
<protein>
    <recommendedName>
        <fullName evidence="1">Small ribosomal subunit protein uS15</fullName>
    </recommendedName>
    <alternativeName>
        <fullName evidence="2">30S ribosomal protein S15</fullName>
    </alternativeName>
</protein>
<keyword id="KW-1185">Reference proteome</keyword>
<keyword id="KW-0687">Ribonucleoprotein</keyword>
<keyword id="KW-0689">Ribosomal protein</keyword>
<keyword id="KW-0694">RNA-binding</keyword>
<keyword id="KW-0699">rRNA-binding</keyword>
<organism>
    <name type="scientific">Leuconostoc citreum (strain KM20)</name>
    <dbReference type="NCBI Taxonomy" id="349519"/>
    <lineage>
        <taxon>Bacteria</taxon>
        <taxon>Bacillati</taxon>
        <taxon>Bacillota</taxon>
        <taxon>Bacilli</taxon>
        <taxon>Lactobacillales</taxon>
        <taxon>Lactobacillaceae</taxon>
        <taxon>Leuconostoc</taxon>
    </lineage>
</organism>
<feature type="chain" id="PRO_1000143136" description="Small ribosomal subunit protein uS15">
    <location>
        <begin position="1"/>
        <end position="89"/>
    </location>
</feature>
<proteinExistence type="inferred from homology"/>
<gene>
    <name evidence="1" type="primary">rpsO</name>
    <name type="ordered locus">LCK_01343</name>
</gene>
<accession>B1N065</accession>
<comment type="function">
    <text evidence="1">One of the primary rRNA binding proteins, it binds directly to 16S rRNA where it helps nucleate assembly of the platform of the 30S subunit by binding and bridging several RNA helices of the 16S rRNA.</text>
</comment>
<comment type="function">
    <text evidence="1">Forms an intersubunit bridge (bridge B4) with the 23S rRNA of the 50S subunit in the ribosome.</text>
</comment>
<comment type="subunit">
    <text evidence="1">Part of the 30S ribosomal subunit. Forms a bridge to the 50S subunit in the 70S ribosome, contacting the 23S rRNA.</text>
</comment>
<comment type="similarity">
    <text evidence="1">Belongs to the universal ribosomal protein uS15 family.</text>
</comment>
<name>RS15_LEUCK</name>